<sequence length="152" mass="17500">MGLSNKFKSFFFLDEEEEYYEEEVAREPEPMQKKTKKEKPSKNRFYAVEEEDAKVVSMQGAQFSSRMVLAEPRVYAEAQELADYLKDYKTVVVNLQRISHDQATRIVDFLSGTVYALGGDIQRVGNNIFLCTPDNVEVNGSISEMLDEQNFM</sequence>
<gene>
    <name evidence="1" type="primary">sepF</name>
    <name type="ordered locus">lin2136</name>
</gene>
<name>SEPF_LISIN</name>
<dbReference type="EMBL" id="AL596171">
    <property type="protein sequence ID" value="CAC97366.1"/>
    <property type="molecule type" value="Genomic_DNA"/>
</dbReference>
<dbReference type="PIR" id="AF1699">
    <property type="entry name" value="AF1699"/>
</dbReference>
<dbReference type="RefSeq" id="WP_003763262.1">
    <property type="nucleotide sequence ID" value="NC_003212.1"/>
</dbReference>
<dbReference type="SMR" id="Q929Y7"/>
<dbReference type="STRING" id="272626.gene:17566494"/>
<dbReference type="GeneID" id="93235475"/>
<dbReference type="KEGG" id="lin:lin2136"/>
<dbReference type="eggNOG" id="COG1799">
    <property type="taxonomic scope" value="Bacteria"/>
</dbReference>
<dbReference type="HOGENOM" id="CLU_078499_4_1_9"/>
<dbReference type="OrthoDB" id="9815206at2"/>
<dbReference type="Proteomes" id="UP000002513">
    <property type="component" value="Chromosome"/>
</dbReference>
<dbReference type="GO" id="GO:0005737">
    <property type="term" value="C:cytoplasm"/>
    <property type="evidence" value="ECO:0007669"/>
    <property type="project" value="UniProtKB-SubCell"/>
</dbReference>
<dbReference type="GO" id="GO:0000917">
    <property type="term" value="P:division septum assembly"/>
    <property type="evidence" value="ECO:0007669"/>
    <property type="project" value="UniProtKB-KW"/>
</dbReference>
<dbReference type="GO" id="GO:0043093">
    <property type="term" value="P:FtsZ-dependent cytokinesis"/>
    <property type="evidence" value="ECO:0007669"/>
    <property type="project" value="UniProtKB-UniRule"/>
</dbReference>
<dbReference type="Gene3D" id="3.30.110.150">
    <property type="entry name" value="SepF-like protein"/>
    <property type="match status" value="1"/>
</dbReference>
<dbReference type="HAMAP" id="MF_01197">
    <property type="entry name" value="SepF"/>
    <property type="match status" value="1"/>
</dbReference>
<dbReference type="InterPro" id="IPR023052">
    <property type="entry name" value="Cell_div_SepF"/>
</dbReference>
<dbReference type="InterPro" id="IPR007561">
    <property type="entry name" value="Cell_div_SepF/SepF-rel"/>
</dbReference>
<dbReference type="InterPro" id="IPR038594">
    <property type="entry name" value="SepF-like_sf"/>
</dbReference>
<dbReference type="PANTHER" id="PTHR35798">
    <property type="entry name" value="CELL DIVISION PROTEIN SEPF"/>
    <property type="match status" value="1"/>
</dbReference>
<dbReference type="PANTHER" id="PTHR35798:SF1">
    <property type="entry name" value="CELL DIVISION PROTEIN SEPF"/>
    <property type="match status" value="1"/>
</dbReference>
<dbReference type="Pfam" id="PF04472">
    <property type="entry name" value="SepF"/>
    <property type="match status" value="1"/>
</dbReference>
<protein>
    <recommendedName>
        <fullName evidence="1">Cell division protein SepF</fullName>
    </recommendedName>
</protein>
<organism>
    <name type="scientific">Listeria innocua serovar 6a (strain ATCC BAA-680 / CLIP 11262)</name>
    <dbReference type="NCBI Taxonomy" id="272626"/>
    <lineage>
        <taxon>Bacteria</taxon>
        <taxon>Bacillati</taxon>
        <taxon>Bacillota</taxon>
        <taxon>Bacilli</taxon>
        <taxon>Bacillales</taxon>
        <taxon>Listeriaceae</taxon>
        <taxon>Listeria</taxon>
    </lineage>
</organism>
<reference key="1">
    <citation type="journal article" date="2001" name="Science">
        <title>Comparative genomics of Listeria species.</title>
        <authorList>
            <person name="Glaser P."/>
            <person name="Frangeul L."/>
            <person name="Buchrieser C."/>
            <person name="Rusniok C."/>
            <person name="Amend A."/>
            <person name="Baquero F."/>
            <person name="Berche P."/>
            <person name="Bloecker H."/>
            <person name="Brandt P."/>
            <person name="Chakraborty T."/>
            <person name="Charbit A."/>
            <person name="Chetouani F."/>
            <person name="Couve E."/>
            <person name="de Daruvar A."/>
            <person name="Dehoux P."/>
            <person name="Domann E."/>
            <person name="Dominguez-Bernal G."/>
            <person name="Duchaud E."/>
            <person name="Durant L."/>
            <person name="Dussurget O."/>
            <person name="Entian K.-D."/>
            <person name="Fsihi H."/>
            <person name="Garcia-del Portillo F."/>
            <person name="Garrido P."/>
            <person name="Gautier L."/>
            <person name="Goebel W."/>
            <person name="Gomez-Lopez N."/>
            <person name="Hain T."/>
            <person name="Hauf J."/>
            <person name="Jackson D."/>
            <person name="Jones L.-M."/>
            <person name="Kaerst U."/>
            <person name="Kreft J."/>
            <person name="Kuhn M."/>
            <person name="Kunst F."/>
            <person name="Kurapkat G."/>
            <person name="Madueno E."/>
            <person name="Maitournam A."/>
            <person name="Mata Vicente J."/>
            <person name="Ng E."/>
            <person name="Nedjari H."/>
            <person name="Nordsiek G."/>
            <person name="Novella S."/>
            <person name="de Pablos B."/>
            <person name="Perez-Diaz J.-C."/>
            <person name="Purcell R."/>
            <person name="Remmel B."/>
            <person name="Rose M."/>
            <person name="Schlueter T."/>
            <person name="Simoes N."/>
            <person name="Tierrez A."/>
            <person name="Vazquez-Boland J.-A."/>
            <person name="Voss H."/>
            <person name="Wehland J."/>
            <person name="Cossart P."/>
        </authorList>
    </citation>
    <scope>NUCLEOTIDE SEQUENCE [LARGE SCALE GENOMIC DNA]</scope>
    <source>
        <strain>ATCC BAA-680 / CLIP 11262</strain>
    </source>
</reference>
<comment type="function">
    <text evidence="1">Cell division protein that is part of the divisome complex and is recruited early to the Z-ring. Probably stimulates Z-ring formation, perhaps through the cross-linking of FtsZ protofilaments. Its function overlaps with FtsA.</text>
</comment>
<comment type="subunit">
    <text evidence="1">Homodimer. Interacts with FtsZ.</text>
</comment>
<comment type="subcellular location">
    <subcellularLocation>
        <location evidence="1">Cytoplasm</location>
    </subcellularLocation>
    <text evidence="1">Localizes to the division site, in a FtsZ-dependent manner.</text>
</comment>
<comment type="similarity">
    <text evidence="1">Belongs to the SepF family.</text>
</comment>
<accession>Q929Y7</accession>
<feature type="chain" id="PRO_0000334032" description="Cell division protein SepF">
    <location>
        <begin position="1"/>
        <end position="152"/>
    </location>
</feature>
<feature type="region of interest" description="Disordered" evidence="2">
    <location>
        <begin position="23"/>
        <end position="42"/>
    </location>
</feature>
<feature type="compositionally biased region" description="Basic and acidic residues" evidence="2">
    <location>
        <begin position="23"/>
        <end position="32"/>
    </location>
</feature>
<proteinExistence type="inferred from homology"/>
<keyword id="KW-0131">Cell cycle</keyword>
<keyword id="KW-0132">Cell division</keyword>
<keyword id="KW-0963">Cytoplasm</keyword>
<keyword id="KW-0717">Septation</keyword>
<evidence type="ECO:0000255" key="1">
    <source>
        <dbReference type="HAMAP-Rule" id="MF_01197"/>
    </source>
</evidence>
<evidence type="ECO:0000256" key="2">
    <source>
        <dbReference type="SAM" id="MobiDB-lite"/>
    </source>
</evidence>